<keyword id="KW-1003">Cell membrane</keyword>
<keyword id="KW-0963">Cytoplasm</keyword>
<keyword id="KW-0344">Guanine-nucleotide releasing factor</keyword>
<keyword id="KW-0472">Membrane</keyword>
<keyword id="KW-0597">Phosphoprotein</keyword>
<evidence type="ECO:0000250" key="1"/>
<evidence type="ECO:0000250" key="2">
    <source>
        <dbReference type="UniProtKB" id="P34225"/>
    </source>
</evidence>
<evidence type="ECO:0000255" key="3">
    <source>
        <dbReference type="PROSITE-ProRule" id="PRU00189"/>
    </source>
</evidence>
<evidence type="ECO:0000256" key="4">
    <source>
        <dbReference type="SAM" id="MobiDB-lite"/>
    </source>
</evidence>
<evidence type="ECO:0000305" key="5"/>
<comment type="function">
    <text evidence="1">Guanine nucleotide exchange factor for ARF3 required for localization of ARF3 to the bud neck and tip and involved in actin patch polarization.</text>
</comment>
<comment type="subcellular location">
    <subcellularLocation>
        <location evidence="1">Cytoplasm</location>
    </subcellularLocation>
    <subcellularLocation>
        <location evidence="1">Cell membrane</location>
        <topology evidence="1">Peripheral membrane protein</topology>
    </subcellularLocation>
    <subcellularLocation>
        <location evidence="1">Bud neck</location>
    </subcellularLocation>
    <subcellularLocation>
        <location evidence="1">Bud tip</location>
    </subcellularLocation>
    <text evidence="1">Localizes at the cell membrane only at the bud neck and bud tip and this localization is ARF3-dependent.</text>
</comment>
<comment type="similarity">
    <text evidence="5">Belongs to the YEL1 family.</text>
</comment>
<dbReference type="EMBL" id="AAFW02000011">
    <property type="protein sequence ID" value="EDN64557.1"/>
    <property type="molecule type" value="Genomic_DNA"/>
</dbReference>
<dbReference type="SMR" id="A6ZKN8"/>
<dbReference type="HOGENOM" id="CLU_017717_0_0_1"/>
<dbReference type="Proteomes" id="UP000007060">
    <property type="component" value="Unassembled WGS sequence"/>
</dbReference>
<dbReference type="GO" id="GO:0005935">
    <property type="term" value="C:cellular bud neck"/>
    <property type="evidence" value="ECO:0007669"/>
    <property type="project" value="UniProtKB-SubCell"/>
</dbReference>
<dbReference type="GO" id="GO:0005934">
    <property type="term" value="C:cellular bud tip"/>
    <property type="evidence" value="ECO:0007669"/>
    <property type="project" value="UniProtKB-SubCell"/>
</dbReference>
<dbReference type="GO" id="GO:0005737">
    <property type="term" value="C:cytoplasm"/>
    <property type="evidence" value="ECO:0007669"/>
    <property type="project" value="UniProtKB-SubCell"/>
</dbReference>
<dbReference type="GO" id="GO:0005886">
    <property type="term" value="C:plasma membrane"/>
    <property type="evidence" value="ECO:0007669"/>
    <property type="project" value="UniProtKB-SubCell"/>
</dbReference>
<dbReference type="GO" id="GO:0005085">
    <property type="term" value="F:guanyl-nucleotide exchange factor activity"/>
    <property type="evidence" value="ECO:0007669"/>
    <property type="project" value="UniProtKB-KW"/>
</dbReference>
<dbReference type="GO" id="GO:0032012">
    <property type="term" value="P:regulation of ARF protein signal transduction"/>
    <property type="evidence" value="ECO:0007669"/>
    <property type="project" value="InterPro"/>
</dbReference>
<dbReference type="CDD" id="cd00171">
    <property type="entry name" value="Sec7"/>
    <property type="match status" value="1"/>
</dbReference>
<dbReference type="Gene3D" id="1.10.1000.11">
    <property type="entry name" value="Arf Nucleotide-binding Site Opener,domain 2"/>
    <property type="match status" value="1"/>
</dbReference>
<dbReference type="InterPro" id="IPR056468">
    <property type="entry name" value="PH_GEF_YEL1"/>
</dbReference>
<dbReference type="InterPro" id="IPR023394">
    <property type="entry name" value="Sec7_C_sf"/>
</dbReference>
<dbReference type="InterPro" id="IPR000904">
    <property type="entry name" value="Sec7_dom"/>
</dbReference>
<dbReference type="InterPro" id="IPR035999">
    <property type="entry name" value="Sec7_dom_sf"/>
</dbReference>
<dbReference type="Pfam" id="PF23633">
    <property type="entry name" value="PH_GEF_YEL1"/>
    <property type="match status" value="1"/>
</dbReference>
<dbReference type="Pfam" id="PF01369">
    <property type="entry name" value="Sec7"/>
    <property type="match status" value="1"/>
</dbReference>
<dbReference type="SMART" id="SM00222">
    <property type="entry name" value="Sec7"/>
    <property type="match status" value="1"/>
</dbReference>
<dbReference type="SUPFAM" id="SSF48425">
    <property type="entry name" value="Sec7 domain"/>
    <property type="match status" value="1"/>
</dbReference>
<dbReference type="PROSITE" id="PS50190">
    <property type="entry name" value="SEC7"/>
    <property type="match status" value="1"/>
</dbReference>
<proteinExistence type="inferred from homology"/>
<organism>
    <name type="scientific">Saccharomyces cerevisiae (strain YJM789)</name>
    <name type="common">Baker's yeast</name>
    <dbReference type="NCBI Taxonomy" id="307796"/>
    <lineage>
        <taxon>Eukaryota</taxon>
        <taxon>Fungi</taxon>
        <taxon>Dikarya</taxon>
        <taxon>Ascomycota</taxon>
        <taxon>Saccharomycotina</taxon>
        <taxon>Saccharomycetes</taxon>
        <taxon>Saccharomycetales</taxon>
        <taxon>Saccharomycetaceae</taxon>
        <taxon>Saccharomyces</taxon>
    </lineage>
</organism>
<accession>A6ZKN8</accession>
<sequence length="687" mass="78768">MCASLNEVKKNDTYGVSQKGYNDNFSESEGVLHGSKSMPTSMKNMLQSPTMVNMCDILQNKEAANDEKPVIPTTDTATAGTGTEDISSTQSEETDQNSHLIASEILEGTFKDVSYKEYANFLGNDNNNQVLTEFVKLLSPLPSSLLETLFNLSKSIYFIAEAQNIDRILECLSIEWIACHPNTHWKSGYKSCHIVLFSLLILNSDLHNNFQVDHKKIKFSMVAFINNTLRALREENEYEELKIYSREHLIIEELSEYYKTLNETPLPLCTESRTSINISDNQSSLKRFSTLGSREFSTSNLRSVNSNSTTLYSRDGQVSVREMSAKSNKNFHNNHPMDALYLKESFDDGLITENGSSWFMDDLILISKKSLPRKYSKRDKDQVAAPKMTSKRNKSFFGWLKPSKTTTLIEHTSRRTSLSYLNKDSEWERVKIQVKEGRIFIFKIKPDVKDIIQSSETDSATIDYFKDISSSYFAYSLLEAEAHVVQDNIIIGSGAMKSNVCNKNTKRKSGNFTVSFPENINGPKLVLEFQTRSVEEAHKFMDCINFWAGRISPVPLTQFEAVSNAEYGWSDKILTEHASLNLKNIVVSEWKPLLGLELLYEDAKDVEMVELKERLKELMNFTRQLGIWIDKHNEIKDKLVEIWSFDDNYFEAVMNNWNSRYLYMNNQYKKRLSYLKALQKAMGSVQF</sequence>
<protein>
    <recommendedName>
        <fullName>Guanine-nucleotide exchange factor YEL1</fullName>
    </recommendedName>
    <alternativeName>
        <fullName>EFA6-like protein 1</fullName>
    </alternativeName>
</protein>
<feature type="chain" id="PRO_0000404228" description="Guanine-nucleotide exchange factor YEL1">
    <location>
        <begin position="1"/>
        <end position="687"/>
    </location>
</feature>
<feature type="domain" description="SEC7" evidence="3">
    <location>
        <begin position="57"/>
        <end position="264"/>
    </location>
</feature>
<feature type="domain" description="PH">
    <location>
        <begin position="412"/>
        <end position="551"/>
    </location>
</feature>
<feature type="region of interest" description="Disordered" evidence="4">
    <location>
        <begin position="14"/>
        <end position="35"/>
    </location>
</feature>
<feature type="region of interest" description="Disordered" evidence="4">
    <location>
        <begin position="63"/>
        <end position="97"/>
    </location>
</feature>
<feature type="compositionally biased region" description="Polar residues" evidence="4">
    <location>
        <begin position="14"/>
        <end position="27"/>
    </location>
</feature>
<feature type="compositionally biased region" description="Low complexity" evidence="4">
    <location>
        <begin position="73"/>
        <end position="83"/>
    </location>
</feature>
<feature type="modified residue" description="Phosphothreonine" evidence="2">
    <location>
        <position position="290"/>
    </location>
</feature>
<feature type="modified residue" description="Phosphoserine" evidence="2">
    <location>
        <position position="293"/>
    </location>
</feature>
<feature type="modified residue" description="Phosphoserine" evidence="2">
    <location>
        <position position="299"/>
    </location>
</feature>
<reference key="1">
    <citation type="journal article" date="2007" name="Proc. Natl. Acad. Sci. U.S.A.">
        <title>Genome sequencing and comparative analysis of Saccharomyces cerevisiae strain YJM789.</title>
        <authorList>
            <person name="Wei W."/>
            <person name="McCusker J.H."/>
            <person name="Hyman R.W."/>
            <person name="Jones T."/>
            <person name="Ning Y."/>
            <person name="Cao Z."/>
            <person name="Gu Z."/>
            <person name="Bruno D."/>
            <person name="Miranda M."/>
            <person name="Nguyen M."/>
            <person name="Wilhelmy J."/>
            <person name="Komp C."/>
            <person name="Tamse R."/>
            <person name="Wang X."/>
            <person name="Jia P."/>
            <person name="Luedi P."/>
            <person name="Oefner P.J."/>
            <person name="David L."/>
            <person name="Dietrich F.S."/>
            <person name="Li Y."/>
            <person name="Davis R.W."/>
            <person name="Steinmetz L.M."/>
        </authorList>
    </citation>
    <scope>NUCLEOTIDE SEQUENCE [LARGE SCALE GENOMIC DNA]</scope>
    <source>
        <strain>YJM789</strain>
    </source>
</reference>
<gene>
    <name type="primary">YEL1</name>
    <name type="ORF">SCY_0158</name>
</gene>
<name>YEL1_YEAS7</name>